<comment type="function">
    <text evidence="1 3">Inhibitory receptor that acts as a critical regulator of hematopoietic lineage differentiation, megakaryocyte function and platelet production (PubMed:23112346). Inhibits platelet aggregation and activation by agonists such as ADP and collagen-related peptide (By similarity). This regulation of megakaryocate function as well as platelet production ann activation is done through the inhibition (via the 2 ITIM motifs) of the receptors CLEC1B and GP6:FcRgamma signaling (PubMed:23112346). Appears to operate in a calcium-independent manner (By similarity).</text>
</comment>
<comment type="subunit">
    <text evidence="1 3">Interacts (via ITIM motif) with PTPN6 and PTPN11 (PubMed:23112346). Binds to heparin (By similarity).</text>
</comment>
<comment type="subcellular location">
    <subcellularLocation>
        <location evidence="5">Cell membrane</location>
        <topology evidence="1 2">Single-pass type I membrane protein</topology>
    </subcellularLocation>
</comment>
<comment type="tissue specificity">
    <text evidence="3">Expressed in mature megakaryocytes and platelets. Not expressed by immature megakaryocytes.</text>
</comment>
<comment type="domain">
    <text evidence="5">Contains both a transmembrane region and 2 copies of a cytoplasmic motif that is referred to as the immunoreceptor tyrosine-based inhibitor motif (ITIM). This motif is involved in modulation of cellular responses. The phosphorylated ITIM motif can bind the SH2 domain of several SH2-containing phosphatases. The 2 ITIM motifs of isoform B are required for the inhibition of CLEC1B and GP6:FCER1G signaling and platelet activation.</text>
</comment>
<comment type="PTM">
    <text evidence="3">N-glycosylated.</text>
</comment>
<comment type="PTM">
    <text evidence="1">May be O-glycosylated.</text>
</comment>
<comment type="PTM">
    <text evidence="3">Phosphorylated.</text>
</comment>
<comment type="disruption phenotype">
    <text evidence="3">Mutant mice exhibit macrothrombocytopenia (reduced platelet numbers and the presence of enlarged platelets) and a susceptibility to bleeding because of defective platelet production and function. They show an increased platelet turnover leading to reduced platelet numbers. Their megakaryocytes exhibit reduced integrin-mediated functions, defective formation of proplatelets as well as an increased metalloproteinase production.</text>
</comment>
<feature type="signal peptide" evidence="2">
    <location>
        <begin position="1"/>
        <end position="17"/>
    </location>
</feature>
<feature type="chain" id="PRO_5009689216" description="Megakaryocyte and platelet inhibitory receptor G6b">
    <location>
        <begin position="18"/>
        <end position="242"/>
    </location>
</feature>
<feature type="transmembrane region" description="Helical" evidence="2">
    <location>
        <begin position="141"/>
        <end position="161"/>
    </location>
</feature>
<feature type="short sequence motif" description="ITIM motif" evidence="4">
    <location>
        <begin position="210"/>
        <end position="215"/>
    </location>
</feature>
<feature type="short sequence motif" description="ITIM motif" evidence="4">
    <location>
        <begin position="236"/>
        <end position="241"/>
    </location>
</feature>
<feature type="modified residue" description="Phosphotyrosine" evidence="1">
    <location>
        <position position="212"/>
    </location>
</feature>
<feature type="glycosylation site" description="N-linked (GlcNAc...) asparagine" evidence="2">
    <location>
        <position position="32"/>
    </location>
</feature>
<feature type="glycosylation site" description="N-linked (GlcNAc...) asparagine" evidence="2">
    <location>
        <position position="112"/>
    </location>
</feature>
<accession>D7PDD4</accession>
<name>G6B_MOUSE</name>
<proteinExistence type="evidence at protein level"/>
<sequence>MALVLPLLPLLLSKVQGNPEVSLEGSPGDRVNLSCIGVSDPTRWAWAPSFPACKGLSKGRRPILWASTRGTPTVLQHFSGRLRSLDNGIKRLELLLSAGDSGTFFCKGRHENESRTVLQVLGDKAGCRPAGSTHGYEYPKVLIPLLGVGLVLGLGVAGVVWRRRRLSPPPPPPPPPGPLPTFAPVINAEPQRPLEQESKISGHLDQEPSLHYADLDHSVLGRHRRMSTVVSGDASTVYAVVV</sequence>
<keyword id="KW-1003">Cell membrane</keyword>
<keyword id="KW-0325">Glycoprotein</keyword>
<keyword id="KW-0472">Membrane</keyword>
<keyword id="KW-0597">Phosphoprotein</keyword>
<keyword id="KW-0675">Receptor</keyword>
<keyword id="KW-1185">Reference proteome</keyword>
<keyword id="KW-0732">Signal</keyword>
<keyword id="KW-0812">Transmembrane</keyword>
<keyword id="KW-1133">Transmembrane helix</keyword>
<reference key="1">
    <citation type="journal article" date="2012" name="Sci. Signal.">
        <title>Mice lacking the ITIM-containing receptor G6b-B exhibit macrothrombocytopenia and aberrant platelet function.</title>
        <authorList>
            <person name="Mazharian A."/>
            <person name="Wang Y.J."/>
            <person name="Mori J."/>
            <person name="Bem D."/>
            <person name="Finney B."/>
            <person name="Heising S."/>
            <person name="Gissen P."/>
            <person name="White J.G."/>
            <person name="Berndt M.C."/>
            <person name="Gardiner E.E."/>
            <person name="Nieswandt B."/>
            <person name="Douglas M.R."/>
            <person name="Campbell R.D."/>
            <person name="Watson S.P."/>
            <person name="Senis Y.A."/>
        </authorList>
    </citation>
    <scope>NUCLEOTIDE SEQUENCE [MRNA]</scope>
    <scope>DISRUPTION PHENOTYPE</scope>
    <scope>FUNCTION</scope>
    <scope>TISSUE SPECIFICITY</scope>
    <scope>GLYCOSYLATION</scope>
    <scope>PHOSPHORYLATION</scope>
    <scope>INTERACTION WITH PTPN6 AND PTPN11</scope>
    <scope>DOMAIN</scope>
</reference>
<reference key="2">
    <citation type="journal article" date="2009" name="PLoS Biol.">
        <title>Lineage-specific biology revealed by a finished genome assembly of the mouse.</title>
        <authorList>
            <person name="Church D.M."/>
            <person name="Goodstadt L."/>
            <person name="Hillier L.W."/>
            <person name="Zody M.C."/>
            <person name="Goldstein S."/>
            <person name="She X."/>
            <person name="Bult C.J."/>
            <person name="Agarwala R."/>
            <person name="Cherry J.L."/>
            <person name="DiCuccio M."/>
            <person name="Hlavina W."/>
            <person name="Kapustin Y."/>
            <person name="Meric P."/>
            <person name="Maglott D."/>
            <person name="Birtle Z."/>
            <person name="Marques A.C."/>
            <person name="Graves T."/>
            <person name="Zhou S."/>
            <person name="Teague B."/>
            <person name="Potamousis K."/>
            <person name="Churas C."/>
            <person name="Place M."/>
            <person name="Herschleb J."/>
            <person name="Runnheim R."/>
            <person name="Forrest D."/>
            <person name="Amos-Landgraf J."/>
            <person name="Schwartz D.C."/>
            <person name="Cheng Z."/>
            <person name="Lindblad-Toh K."/>
            <person name="Eichler E.E."/>
            <person name="Ponting C.P."/>
        </authorList>
    </citation>
    <scope>NUCLEOTIDE SEQUENCE [LARGE SCALE GENOMIC DNA]</scope>
    <source>
        <strain>C57BL/6J</strain>
    </source>
</reference>
<evidence type="ECO:0000250" key="1">
    <source>
        <dbReference type="UniProtKB" id="O95866"/>
    </source>
</evidence>
<evidence type="ECO:0000255" key="2"/>
<evidence type="ECO:0000269" key="3">
    <source>
    </source>
</evidence>
<evidence type="ECO:0000303" key="4">
    <source>
    </source>
</evidence>
<evidence type="ECO:0000305" key="5">
    <source>
    </source>
</evidence>
<evidence type="ECO:0000312" key="6">
    <source>
        <dbReference type="MGI" id="MGI:2146995"/>
    </source>
</evidence>
<protein>
    <recommendedName>
        <fullName evidence="1">Megakaryocyte and platelet inhibitory receptor G6b</fullName>
    </recommendedName>
    <alternativeName>
        <fullName evidence="4">ITIM-receptor G6b-B</fullName>
    </alternativeName>
    <alternativeName>
        <fullName evidence="4">Immunoreceptor tyrosine-based inhibitory motif (ITIM)-containing platelet receptor</fullName>
    </alternativeName>
</protein>
<gene>
    <name evidence="1" type="primary">Mpig6b</name>
    <name evidence="6" type="synonym">AU023871</name>
    <name evidence="6" type="synonym">G6b</name>
    <name evidence="4" type="synonym">G6b-B</name>
</gene>
<dbReference type="EMBL" id="AC087117">
    <property type="status" value="NOT_ANNOTATED_CDS"/>
    <property type="molecule type" value="Genomic_DNA"/>
</dbReference>
<dbReference type="EMBL" id="GU269270">
    <property type="protein sequence ID" value="ADD91692.1"/>
    <property type="molecule type" value="mRNA"/>
</dbReference>
<dbReference type="CCDS" id="CCDS57071.1"/>
<dbReference type="RefSeq" id="NP_001177941.1">
    <property type="nucleotide sequence ID" value="NM_001191012.1"/>
</dbReference>
<dbReference type="SMR" id="D7PDD4"/>
<dbReference type="FunCoup" id="D7PDD4">
    <property type="interactions" value="166"/>
</dbReference>
<dbReference type="STRING" id="10090.ENSMUSP00000133377"/>
<dbReference type="GlyCosmos" id="D7PDD4">
    <property type="glycosylation" value="2 sites, No reported glycans"/>
</dbReference>
<dbReference type="GlyGen" id="D7PDD4">
    <property type="glycosylation" value="2 sites"/>
</dbReference>
<dbReference type="iPTMnet" id="D7PDD4"/>
<dbReference type="PhosphoSitePlus" id="D7PDD4"/>
<dbReference type="PaxDb" id="10090-ENSMUSP00000094950"/>
<dbReference type="ProteomicsDB" id="273020"/>
<dbReference type="Antibodypedia" id="27557">
    <property type="antibodies" value="96 antibodies from 19 providers"/>
</dbReference>
<dbReference type="Ensembl" id="ENSMUST00000174190.2">
    <property type="protein sequence ID" value="ENSMUSP00000133377.2"/>
    <property type="gene ID" value="ENSMUSG00000073414.9"/>
</dbReference>
<dbReference type="GeneID" id="106722"/>
<dbReference type="KEGG" id="mmu:106722"/>
<dbReference type="UCSC" id="uc012aqy.1">
    <property type="organism name" value="mouse"/>
</dbReference>
<dbReference type="AGR" id="MGI:2146995"/>
<dbReference type="CTD" id="80739"/>
<dbReference type="MGI" id="MGI:2146995">
    <property type="gene designation" value="Mpig6b"/>
</dbReference>
<dbReference type="VEuPathDB" id="HostDB:ENSMUSG00000073414"/>
<dbReference type="eggNOG" id="ENOG502TEAD">
    <property type="taxonomic scope" value="Eukaryota"/>
</dbReference>
<dbReference type="GeneTree" id="ENSGT00390000017793"/>
<dbReference type="HOGENOM" id="CLU_101026_0_0_1"/>
<dbReference type="InParanoid" id="D7PDD4"/>
<dbReference type="OMA" id="GVVWWWL"/>
<dbReference type="OrthoDB" id="9449554at2759"/>
<dbReference type="PhylomeDB" id="D7PDD4"/>
<dbReference type="Reactome" id="R-MMU-114604">
    <property type="pathway name" value="GPVI-mediated activation cascade"/>
</dbReference>
<dbReference type="BioGRID-ORCS" id="106722">
    <property type="hits" value="2 hits in 77 CRISPR screens"/>
</dbReference>
<dbReference type="PRO" id="PR:D7PDD4"/>
<dbReference type="Proteomes" id="UP000000589">
    <property type="component" value="Chromosome 17"/>
</dbReference>
<dbReference type="RNAct" id="D7PDD4">
    <property type="molecule type" value="protein"/>
</dbReference>
<dbReference type="Bgee" id="ENSMUSG00000073414">
    <property type="expression patterns" value="Expressed in bone marrow and 39 other cell types or tissues"/>
</dbReference>
<dbReference type="ExpressionAtlas" id="D7PDD4">
    <property type="expression patterns" value="baseline and differential"/>
</dbReference>
<dbReference type="GO" id="GO:0005829">
    <property type="term" value="C:cytosol"/>
    <property type="evidence" value="ECO:0007669"/>
    <property type="project" value="Ensembl"/>
</dbReference>
<dbReference type="GO" id="GO:0005783">
    <property type="term" value="C:endoplasmic reticulum"/>
    <property type="evidence" value="ECO:0007669"/>
    <property type="project" value="Ensembl"/>
</dbReference>
<dbReference type="GO" id="GO:0005794">
    <property type="term" value="C:Golgi apparatus"/>
    <property type="evidence" value="ECO:0007669"/>
    <property type="project" value="Ensembl"/>
</dbReference>
<dbReference type="GO" id="GO:0005654">
    <property type="term" value="C:nucleoplasm"/>
    <property type="evidence" value="ECO:0007669"/>
    <property type="project" value="Ensembl"/>
</dbReference>
<dbReference type="GO" id="GO:0005886">
    <property type="term" value="C:plasma membrane"/>
    <property type="evidence" value="ECO:0007669"/>
    <property type="project" value="UniProtKB-SubCell"/>
</dbReference>
<dbReference type="GO" id="GO:0007596">
    <property type="term" value="P:blood coagulation"/>
    <property type="evidence" value="ECO:0000315"/>
    <property type="project" value="MGI"/>
</dbReference>
<dbReference type="GO" id="GO:0030218">
    <property type="term" value="P:erythrocyte differentiation"/>
    <property type="evidence" value="ECO:0000250"/>
    <property type="project" value="UniProtKB"/>
</dbReference>
<dbReference type="GO" id="GO:0007229">
    <property type="term" value="P:integrin-mediated signaling pathway"/>
    <property type="evidence" value="ECO:0000315"/>
    <property type="project" value="MGI"/>
</dbReference>
<dbReference type="GO" id="GO:0035855">
    <property type="term" value="P:megakaryocyte development"/>
    <property type="evidence" value="ECO:0000315"/>
    <property type="project" value="MGI"/>
</dbReference>
<dbReference type="GO" id="GO:0030219">
    <property type="term" value="P:megakaryocyte differentiation"/>
    <property type="evidence" value="ECO:0000250"/>
    <property type="project" value="UniProtKB"/>
</dbReference>
<dbReference type="GO" id="GO:0009968">
    <property type="term" value="P:negative regulation of signal transduction"/>
    <property type="evidence" value="ECO:0000250"/>
    <property type="project" value="UniProtKB"/>
</dbReference>
<dbReference type="GO" id="GO:0030220">
    <property type="term" value="P:platelet formation"/>
    <property type="evidence" value="ECO:0000315"/>
    <property type="project" value="MGI"/>
</dbReference>
<dbReference type="InterPro" id="IPR028070">
    <property type="entry name" value="G6B"/>
</dbReference>
<dbReference type="InterPro" id="IPR048308">
    <property type="entry name" value="G6B_V-set"/>
</dbReference>
<dbReference type="PANTHER" id="PTHR37347">
    <property type="entry name" value="MEGAKARYOCYTE AND PLATELET INHIBITORY RECEPTOR G6B"/>
    <property type="match status" value="1"/>
</dbReference>
<dbReference type="PANTHER" id="PTHR37347:SF1">
    <property type="entry name" value="MEGAKARYOCYTE AND PLATELET INHIBITORY RECEPTOR G6B"/>
    <property type="match status" value="1"/>
</dbReference>
<dbReference type="Pfam" id="PF15096">
    <property type="entry name" value="G6B"/>
    <property type="match status" value="1"/>
</dbReference>
<organism>
    <name type="scientific">Mus musculus</name>
    <name type="common">Mouse</name>
    <dbReference type="NCBI Taxonomy" id="10090"/>
    <lineage>
        <taxon>Eukaryota</taxon>
        <taxon>Metazoa</taxon>
        <taxon>Chordata</taxon>
        <taxon>Craniata</taxon>
        <taxon>Vertebrata</taxon>
        <taxon>Euteleostomi</taxon>
        <taxon>Mammalia</taxon>
        <taxon>Eutheria</taxon>
        <taxon>Euarchontoglires</taxon>
        <taxon>Glires</taxon>
        <taxon>Rodentia</taxon>
        <taxon>Myomorpha</taxon>
        <taxon>Muroidea</taxon>
        <taxon>Muridae</taxon>
        <taxon>Murinae</taxon>
        <taxon>Mus</taxon>
        <taxon>Mus</taxon>
    </lineage>
</organism>